<evidence type="ECO:0000250" key="1">
    <source>
        <dbReference type="UniProtKB" id="P54997"/>
    </source>
</evidence>
<evidence type="ECO:0000269" key="2">
    <source>
    </source>
</evidence>
<evidence type="ECO:0000303" key="3">
    <source>
    </source>
</evidence>
<evidence type="ECO:0000305" key="4"/>
<evidence type="ECO:0000305" key="5">
    <source>
    </source>
</evidence>
<keyword id="KW-0963">Cytoplasm</keyword>
<keyword id="KW-0378">Hydrolase</keyword>
<keyword id="KW-0503">Monooxygenase</keyword>
<keyword id="KW-0560">Oxidoreductase</keyword>
<feature type="chain" id="PRO_0000455395" description="2'-hydroxybiphenyl-2-sulfinate desulfinase">
    <location>
        <begin position="1"/>
        <end position="365"/>
    </location>
</feature>
<feature type="active site" evidence="1">
    <location>
        <position position="27"/>
    </location>
</feature>
<feature type="active site" evidence="1">
    <location>
        <position position="70"/>
    </location>
</feature>
<feature type="binding site" evidence="1">
    <location>
        <position position="27"/>
    </location>
    <ligand>
        <name>2'-hydroxybiphenyl-2-sulfinate</name>
        <dbReference type="ChEBI" id="CHEBI:18218"/>
    </ligand>
</feature>
<feature type="binding site" evidence="1">
    <location>
        <position position="60"/>
    </location>
    <ligand>
        <name>2'-hydroxybiphenyl-2-sulfinate</name>
        <dbReference type="ChEBI" id="CHEBI:18218"/>
    </ligand>
</feature>
<feature type="binding site" evidence="1">
    <location>
        <position position="70"/>
    </location>
    <ligand>
        <name>2'-hydroxybiphenyl-2-sulfinate</name>
        <dbReference type="ChEBI" id="CHEBI:18218"/>
    </ligand>
</feature>
<feature type="site" description="May orient the sulfinate group" evidence="1">
    <location>
        <position position="60"/>
    </location>
</feature>
<proteinExistence type="evidence at protein level"/>
<comment type="function">
    <text evidence="1 5">Catalyzes the third and final step of the '4S' desulfurization pathway that removes covalently bound sulfur from dibenzothiophene (DBT) without breaking carbon-carbon bonds. Oxidizes 2-(2'-hydroxyphenyl)benzene sulphinate (HBPS) to 2-hydroxybiphenyl (HBP) plus sulfite. The rate-limiting step of the '4S' desulfurization pathway.</text>
</comment>
<comment type="catalytic activity">
    <reaction evidence="1 5">
        <text>2'-hydroxybiphenyl-2-sulfinate + H2O = biphenyl-2-ol + sulfite + H(+)</text>
        <dbReference type="Rhea" id="RHEA:12945"/>
        <dbReference type="ChEBI" id="CHEBI:15377"/>
        <dbReference type="ChEBI" id="CHEBI:15378"/>
        <dbReference type="ChEBI" id="CHEBI:17043"/>
        <dbReference type="ChEBI" id="CHEBI:17359"/>
        <dbReference type="ChEBI" id="CHEBI:18218"/>
        <dbReference type="EC" id="3.13.1.3"/>
    </reaction>
</comment>
<comment type="pathway">
    <text evidence="2">Sulfur metabolism; dibenzothiophene degradation.</text>
</comment>
<comment type="subunit">
    <text evidence="1">Monomer.</text>
</comment>
<comment type="subcellular location">
    <subcellularLocation>
        <location evidence="1">Cytoplasm</location>
    </subcellularLocation>
</comment>
<comment type="biotechnology">
    <text evidence="2">Can be used to remove sulfur from polycyclic aromatic sulfur compounds found in gasoline and diesel (biodesulfurization), which are a considerable source of pollution. As the substrates are not very soluble in conventional media, biphasic systems may help improve catalysis. Expression of dszD-dszA-dszB-dszC (cloned in this order) in organic-solvent-tolerant P.putida strain Idaho allows P.putida to grow on 10% p-xylene with DBT as the sole sulfur source. In this P.putida strain 97% of DBT was degraded, 71% of 4,6-dimethyldibenzothiophene and about 50% of 3-methyldibenzothiophene or 4-methyldibenzothiophene was degraded in the presence of 10% p-xylene. Degradation of DBT in the presence of 10% of other organic solvents was tested; when grown in dodecane, cyclohexane or heptanol bacteria metabolized DBT as well as p-xylene, while other organic solvents degraded DBT slightly less well.</text>
</comment>
<comment type="similarity">
    <text evidence="4">Belongs to the DszB desulfinase family.</text>
</comment>
<gene>
    <name evidence="3" type="primary">dszB</name>
</gene>
<dbReference type="EC" id="3.13.1.3" evidence="1 5"/>
<dbReference type="EMBL" id="AY278323">
    <property type="protein sequence ID" value="AAP33511.1"/>
    <property type="molecule type" value="Genomic_DNA"/>
</dbReference>
<dbReference type="RefSeq" id="WP_019750079.1">
    <property type="nucleotide sequence ID" value="NZ_AGCF01000009.1"/>
</dbReference>
<dbReference type="SMR" id="Q6WNP2"/>
<dbReference type="UniPathway" id="UPA00346"/>
<dbReference type="GO" id="GO:0005737">
    <property type="term" value="C:cytoplasm"/>
    <property type="evidence" value="ECO:0007669"/>
    <property type="project" value="UniProtKB-SubCell"/>
</dbReference>
<dbReference type="GO" id="GO:0016787">
    <property type="term" value="F:hydrolase activity"/>
    <property type="evidence" value="ECO:0007669"/>
    <property type="project" value="UniProtKB-KW"/>
</dbReference>
<dbReference type="GO" id="GO:0004497">
    <property type="term" value="F:monooxygenase activity"/>
    <property type="evidence" value="ECO:0007669"/>
    <property type="project" value="UniProtKB-KW"/>
</dbReference>
<dbReference type="GO" id="GO:0018896">
    <property type="term" value="P:dibenzothiophene catabolic process"/>
    <property type="evidence" value="ECO:0007669"/>
    <property type="project" value="UniProtKB-UniPathway"/>
</dbReference>
<dbReference type="CDD" id="cd13554">
    <property type="entry name" value="PBP2_DszB"/>
    <property type="match status" value="1"/>
</dbReference>
<dbReference type="Gene3D" id="3.40.190.270">
    <property type="match status" value="1"/>
</dbReference>
<dbReference type="Gene3D" id="3.40.190.10">
    <property type="entry name" value="Periplasmic binding protein-like II"/>
    <property type="match status" value="1"/>
</dbReference>
<dbReference type="SUPFAM" id="SSF53850">
    <property type="entry name" value="Periplasmic binding protein-like II"/>
    <property type="match status" value="1"/>
</dbReference>
<sequence>MTSRVDPANPGSELDSAIRDTLTYSNCPVPNALLTASESGFLDAAGIELDVLSGQQGTVHFTYDQPAYTRFGGEIPPLLSEGLRAPGRTRLLGITPLLGRQGFFVRDDSPITAAADLAGRRIGVSASAIRILRGQLGDYLELDPWRQTLVALGSWEARALLHTLEHGELGVDDVELVPISSPGVDVPAEQLEESATVKGADLFPDVARGQAAVLASGDVDALYSWLPWAGELQATGARPVVDLGLDERNAYASVWTVSSGLVRQRPGLVQRLVDAAVDAGLWARDHSDAVTSLHAANLGVSTGAVGQGFGADFQQRLVPRLDHDALALLERTQQFLLTNNLLQEPVALDQWAAPEFLNNSLNRHR</sequence>
<protein>
    <recommendedName>
        <fullName evidence="4">2'-hydroxybiphenyl-2-sulfinate desulfinase</fullName>
        <ecNumber evidence="1 5">3.13.1.3</ecNumber>
    </recommendedName>
    <alternativeName>
        <fullName evidence="4">2-(2-hydroxyphenyl)benzenesulfinate desulfinase</fullName>
        <shortName evidence="4">HPBS desulfinase</shortName>
    </alternativeName>
    <alternativeName>
        <fullName evidence="3">Dibenzothiophene desulfurization enzyme B</fullName>
    </alternativeName>
</protein>
<accession>Q6WNP2</accession>
<organism>
    <name type="scientific">Rhodococcus erythropolis (strain XP)</name>
    <dbReference type="NCBI Taxonomy" id="1078016"/>
    <lineage>
        <taxon>Bacteria</taxon>
        <taxon>Bacillati</taxon>
        <taxon>Actinomycetota</taxon>
        <taxon>Actinomycetes</taxon>
        <taxon>Mycobacteriales</taxon>
        <taxon>Nocardiaceae</taxon>
        <taxon>Rhodococcus</taxon>
        <taxon>Rhodococcus erythropolis group</taxon>
    </lineage>
</organism>
<reference key="1">
    <citation type="journal article" date="2006" name="Appl. Environ. Microbiol.">
        <title>Biodesulfurization in biphasic systems containing organic solvents.</title>
        <authorList>
            <person name="Tao F."/>
            <person name="Yu B."/>
            <person name="Xu P."/>
            <person name="Ma C.Q."/>
        </authorList>
    </citation>
    <scope>NUCLEOTIDE SEQUENCE [GENOMIC DNA]</scope>
    <scope>PROBABLE FUNCTION</scope>
    <scope>PATHWAY</scope>
    <scope>BIOTECHNOLOGY</scope>
    <source>
        <strain>XP</strain>
    </source>
</reference>
<name>DSZB_RHOSH</name>